<accession>Q0V9U2</accession>
<dbReference type="EMBL" id="BC121395">
    <property type="protein sequence ID" value="AAI21396.1"/>
    <property type="status" value="ALT_FRAME"/>
    <property type="molecule type" value="mRNA"/>
</dbReference>
<dbReference type="SMR" id="Q0V9U2"/>
<dbReference type="FunCoup" id="Q0V9U2">
    <property type="interactions" value="428"/>
</dbReference>
<dbReference type="STRING" id="8364.ENSXETP00000027478"/>
<dbReference type="PaxDb" id="8364-ENSXETP00000028146"/>
<dbReference type="eggNOG" id="KOG2766">
    <property type="taxonomic scope" value="Eukaryota"/>
</dbReference>
<dbReference type="InParanoid" id="Q0V9U2"/>
<dbReference type="Proteomes" id="UP000008143">
    <property type="component" value="Unplaced"/>
</dbReference>
<dbReference type="Bgee" id="ENSXETG00000012876">
    <property type="expression patterns" value="Expressed in ectoderm-derived structure and 10 other cell types or tissues"/>
</dbReference>
<dbReference type="GO" id="GO:0016020">
    <property type="term" value="C:membrane"/>
    <property type="evidence" value="ECO:0007669"/>
    <property type="project" value="UniProtKB-SubCell"/>
</dbReference>
<dbReference type="GO" id="GO:0022857">
    <property type="term" value="F:transmembrane transporter activity"/>
    <property type="evidence" value="ECO:0007669"/>
    <property type="project" value="InterPro"/>
</dbReference>
<dbReference type="InterPro" id="IPR009262">
    <property type="entry name" value="SLC35_F1/F2/F6"/>
</dbReference>
<dbReference type="InterPro" id="IPR052221">
    <property type="entry name" value="SLC35F_Transporter"/>
</dbReference>
<dbReference type="PANTHER" id="PTHR14233">
    <property type="entry name" value="DUF914-RELATED"/>
    <property type="match status" value="1"/>
</dbReference>
<dbReference type="PANTHER" id="PTHR14233:SF10">
    <property type="entry name" value="SOLUTE CARRIER FAMILY 35 MEMBER F1"/>
    <property type="match status" value="1"/>
</dbReference>
<dbReference type="Pfam" id="PF06027">
    <property type="entry name" value="SLC35F"/>
    <property type="match status" value="1"/>
</dbReference>
<reference key="1">
    <citation type="submission" date="2006-08" db="EMBL/GenBank/DDBJ databases">
        <authorList>
            <consortium name="NIH - Xenopus Gene Collection (XGC) project"/>
        </authorList>
    </citation>
    <scope>NUCLEOTIDE SEQUENCE [LARGE SCALE MRNA]</scope>
    <source>
        <tissue>Brain</tissue>
    </source>
</reference>
<feature type="chain" id="PRO_0000307311" description="Solute carrier family 35 member F2">
    <location>
        <begin position="1"/>
        <end position="391"/>
    </location>
</feature>
<feature type="transmembrane region" description="Helical" evidence="1">
    <location>
        <begin position="39"/>
        <end position="59"/>
    </location>
</feature>
<feature type="transmembrane region" description="Helical" evidence="1">
    <location>
        <begin position="73"/>
        <end position="93"/>
    </location>
</feature>
<feature type="transmembrane region" description="Helical" evidence="1">
    <location>
        <begin position="108"/>
        <end position="128"/>
    </location>
</feature>
<feature type="transmembrane region" description="Helical" evidence="1">
    <location>
        <begin position="137"/>
        <end position="157"/>
    </location>
</feature>
<feature type="transmembrane region" description="Helical" evidence="1">
    <location>
        <begin position="165"/>
        <end position="185"/>
    </location>
</feature>
<feature type="transmembrane region" description="Helical" evidence="1">
    <location>
        <begin position="200"/>
        <end position="220"/>
    </location>
</feature>
<feature type="transmembrane region" description="Helical" evidence="1">
    <location>
        <begin position="230"/>
        <end position="250"/>
    </location>
</feature>
<feature type="transmembrane region" description="Helical" evidence="1">
    <location>
        <begin position="267"/>
        <end position="287"/>
    </location>
</feature>
<feature type="transmembrane region" description="Helical" evidence="1">
    <location>
        <begin position="294"/>
        <end position="314"/>
    </location>
</feature>
<feature type="transmembrane region" description="Helical" evidence="1">
    <location>
        <begin position="318"/>
        <end position="338"/>
    </location>
</feature>
<feature type="region of interest" description="Disordered" evidence="2">
    <location>
        <begin position="361"/>
        <end position="391"/>
    </location>
</feature>
<feature type="compositionally biased region" description="Polar residues" evidence="2">
    <location>
        <begin position="365"/>
        <end position="380"/>
    </location>
</feature>
<keyword id="KW-0472">Membrane</keyword>
<keyword id="KW-1185">Reference proteome</keyword>
<keyword id="KW-0812">Transmembrane</keyword>
<keyword id="KW-1133">Transmembrane helix</keyword>
<keyword id="KW-0813">Transport</keyword>
<protein>
    <recommendedName>
        <fullName>Solute carrier family 35 member F2</fullName>
    </recommendedName>
</protein>
<name>S35F2_XENTR</name>
<gene>
    <name type="primary">slc35f2</name>
</gene>
<proteinExistence type="evidence at transcript level"/>
<organism>
    <name type="scientific">Xenopus tropicalis</name>
    <name type="common">Western clawed frog</name>
    <name type="synonym">Silurana tropicalis</name>
    <dbReference type="NCBI Taxonomy" id="8364"/>
    <lineage>
        <taxon>Eukaryota</taxon>
        <taxon>Metazoa</taxon>
        <taxon>Chordata</taxon>
        <taxon>Craniata</taxon>
        <taxon>Vertebrata</taxon>
        <taxon>Euteleostomi</taxon>
        <taxon>Amphibia</taxon>
        <taxon>Batrachia</taxon>
        <taxon>Anura</taxon>
        <taxon>Pipoidea</taxon>
        <taxon>Pipidae</taxon>
        <taxon>Xenopodinae</taxon>
        <taxon>Xenopus</taxon>
        <taxon>Silurana</taxon>
    </lineage>
</organism>
<comment type="function">
    <text evidence="3">Putative solute transporter.</text>
</comment>
<comment type="subcellular location">
    <subcellularLocation>
        <location evidence="3">Membrane</location>
        <topology evidence="3">Multi-pass membrane protein</topology>
    </subcellularLocation>
</comment>
<comment type="similarity">
    <text evidence="3">Belongs to the SLC35F solute transporter family.</text>
</comment>
<comment type="sequence caution" evidence="3">
    <conflict type="frameshift">
        <sequence resource="EMBL-CDS" id="AAI21396"/>
    </conflict>
</comment>
<sequence length="391" mass="44072">MIPEQTNHVVSTIENLPAESISASPGPLHRMRNVFSREMLLSVALGQVLSLLICGIRLTSKYLSEDFHANTPLFQSFLNYILLFLVYTTTLAVRQGEENLLAILKRRWWKYMFLGIIDIEATYLVVKAHQYTTFISIQLLNCFVIPVVILLSWFFLLVRYKVLHFIGAIACILGIGCMAGADVLMGRQQKGDFYPGDSKLIGDVLVLGGATLYGISSVCQEYIVRNLSRVELLGMIGLFGSFFSGIQLAIMEHKELLKVPWDWQIGLLYVGFTACMFGLYSFMPVVIKKTSATAINLSMLTAELYTFFCGLFLFHYKFSGLYLLSFFTILLGLVFYFSTNTYVAQDPRVYKQFRNPSGPVVELPSSGQLEPSVTYTSLSQETEEEPRVRVA</sequence>
<evidence type="ECO:0000255" key="1"/>
<evidence type="ECO:0000256" key="2">
    <source>
        <dbReference type="SAM" id="MobiDB-lite"/>
    </source>
</evidence>
<evidence type="ECO:0000305" key="3"/>